<name>VL2_HPV44</name>
<protein>
    <recommendedName>
        <fullName evidence="1">Minor capsid protein L2</fullName>
    </recommendedName>
</protein>
<proteinExistence type="inferred from homology"/>
<sequence>MAHSRARRRKRASATQLYQTCKAAGTCPSDIIPKVEHNTIADQILKWGSLGVFFGGLGIGTGSGTGGRTGYIPLQSTPRPDIPSVPTARPPILVDTVAPGDPSIVSLVEESAIINSGAPELVPPSHAGFEITTSESTTPAILDVSVTTHTTSTSVFKNPSFADPSVVQSQPAVEAGGHILISTSSISSHPVEEIPLDTFIVSSSDSNPASSTPIPASGARPRIGLYSKALHQVQVTDPAFLSSPQRLITFDNPAYEGEDVTLHFAHNTIHEPPDDAFMDIIRLHRPAIQSRRGRVRFSRIGQRGSMYTRSGKHIGGRIHFYQDISPISAAAEEIELHPLVATAQDSGLFDIYAEPDPDVTEEPVSLSFSTSTPFQRSSVSATPWGNTTVPLSLPADMFVQPGPDIIFPTASTTTPYSPVTPALPTGPVFISGAAFYLYPTWYFARKRRKRVSLFFADVAA</sequence>
<reference key="1">
    <citation type="submission" date="1995-10" db="EMBL/GenBank/DDBJ databases">
        <authorList>
            <person name="Delius H."/>
        </authorList>
    </citation>
    <scope>NUCLEOTIDE SEQUENCE [GENOMIC DNA]</scope>
</reference>
<keyword id="KW-0167">Capsid protein</keyword>
<keyword id="KW-1176">Cytoplasmic inwards viral transport</keyword>
<keyword id="KW-1015">Disulfide bond</keyword>
<keyword id="KW-0238">DNA-binding</keyword>
<keyword id="KW-1039">Host endosome</keyword>
<keyword id="KW-1040">Host Golgi apparatus</keyword>
<keyword id="KW-1048">Host nucleus</keyword>
<keyword id="KW-0945">Host-virus interaction</keyword>
<keyword id="KW-0426">Late protein</keyword>
<keyword id="KW-1177">Microtubular inwards viral transport</keyword>
<keyword id="KW-0597">Phosphoprotein</keyword>
<keyword id="KW-1185">Reference proteome</keyword>
<keyword id="KW-1163">Viral penetration into host nucleus</keyword>
<keyword id="KW-0946">Virion</keyword>
<keyword id="KW-1160">Virus entry into host cell</keyword>
<dbReference type="EMBL" id="U31788">
    <property type="protein sequence ID" value="AAA79462.1"/>
    <property type="molecule type" value="Genomic_DNA"/>
</dbReference>
<dbReference type="Proteomes" id="UP000009123">
    <property type="component" value="Genome"/>
</dbReference>
<dbReference type="GO" id="GO:0043657">
    <property type="term" value="C:host cell"/>
    <property type="evidence" value="ECO:0007669"/>
    <property type="project" value="GOC"/>
</dbReference>
<dbReference type="GO" id="GO:0044174">
    <property type="term" value="C:host cell endosome"/>
    <property type="evidence" value="ECO:0007669"/>
    <property type="project" value="UniProtKB-KW"/>
</dbReference>
<dbReference type="GO" id="GO:0044177">
    <property type="term" value="C:host cell Golgi apparatus"/>
    <property type="evidence" value="ECO:0007669"/>
    <property type="project" value="UniProtKB-SubCell"/>
</dbReference>
<dbReference type="GO" id="GO:0042025">
    <property type="term" value="C:host cell nucleus"/>
    <property type="evidence" value="ECO:0007669"/>
    <property type="project" value="UniProtKB-SubCell"/>
</dbReference>
<dbReference type="GO" id="GO:0019028">
    <property type="term" value="C:viral capsid"/>
    <property type="evidence" value="ECO:0007669"/>
    <property type="project" value="UniProtKB-UniRule"/>
</dbReference>
<dbReference type="GO" id="GO:0003677">
    <property type="term" value="F:DNA binding"/>
    <property type="evidence" value="ECO:0007669"/>
    <property type="project" value="UniProtKB-UniRule"/>
</dbReference>
<dbReference type="GO" id="GO:0005198">
    <property type="term" value="F:structural molecule activity"/>
    <property type="evidence" value="ECO:0007669"/>
    <property type="project" value="UniProtKB-UniRule"/>
</dbReference>
<dbReference type="GO" id="GO:0075521">
    <property type="term" value="P:microtubule-dependent intracellular transport of viral material towards nucleus"/>
    <property type="evidence" value="ECO:0007669"/>
    <property type="project" value="UniProtKB-UniRule"/>
</dbReference>
<dbReference type="GO" id="GO:0046718">
    <property type="term" value="P:symbiont entry into host cell"/>
    <property type="evidence" value="ECO:0007669"/>
    <property type="project" value="UniProtKB-KW"/>
</dbReference>
<dbReference type="GO" id="GO:0075732">
    <property type="term" value="P:viral penetration into host nucleus"/>
    <property type="evidence" value="ECO:0007669"/>
    <property type="project" value="UniProtKB-KW"/>
</dbReference>
<dbReference type="HAMAP" id="MF_04003">
    <property type="entry name" value="PPV_L2"/>
    <property type="match status" value="1"/>
</dbReference>
<dbReference type="InterPro" id="IPR000784">
    <property type="entry name" value="Late_L2"/>
</dbReference>
<dbReference type="Pfam" id="PF00513">
    <property type="entry name" value="Late_protein_L2"/>
    <property type="match status" value="1"/>
</dbReference>
<feature type="chain" id="PRO_0000133611" description="Minor capsid protein L2">
    <location>
        <begin position="1"/>
        <end position="460"/>
    </location>
</feature>
<feature type="short sequence motif" description="Nuclear localization signal" evidence="1">
    <location>
        <begin position="1"/>
        <end position="12"/>
    </location>
</feature>
<feature type="short sequence motif" description="Nuclear localization signal" evidence="1">
    <location>
        <begin position="443"/>
        <end position="451"/>
    </location>
</feature>
<feature type="disulfide bond" evidence="1">
    <location>
        <begin position="21"/>
        <end position="27"/>
    </location>
</feature>
<organism>
    <name type="scientific">Human papillomavirus 44</name>
    <dbReference type="NCBI Taxonomy" id="10592"/>
    <lineage>
        <taxon>Viruses</taxon>
        <taxon>Monodnaviria</taxon>
        <taxon>Shotokuvirae</taxon>
        <taxon>Cossaviricota</taxon>
        <taxon>Papovaviricetes</taxon>
        <taxon>Zurhausenvirales</taxon>
        <taxon>Papillomaviridae</taxon>
        <taxon>Firstpapillomavirinae</taxon>
        <taxon>Alphapapillomavirus</taxon>
        <taxon>Alphapapillomavirus 10</taxon>
    </lineage>
</organism>
<accession>Q80918</accession>
<organismHost>
    <name type="scientific">Homo sapiens</name>
    <name type="common">Human</name>
    <dbReference type="NCBI Taxonomy" id="9606"/>
</organismHost>
<gene>
    <name evidence="1" type="primary">L2</name>
</gene>
<comment type="function">
    <text evidence="1">Minor protein of the capsid that localizes along the inner surface of the virion, within the central cavities beneath the L1 pentamers. Plays a role in capsid stabilization through interaction with the major capsid protein L1. Once the virion enters the host cell, L2 escorts the genomic DNA into the nucleus by promoting escape from the endosomal compartments and traffic through the host Golgi network. Mechanistically, the C-terminus of L2 possesses a cell-penetrating peptide that protudes from the host endosome, interacts with host cytoplasmic retromer cargo and thereby mediates the capsid delivery to the host trans-Golgi network. Plays a role through its interaction with host dynein in the intracellular microtubule-dependent transport of viral capsid toward the nucleus. Mediates the viral genome import into the nucleus through binding to host importins. Once within the nucleus, L2 localizes viral genomes to host PML bodies in order to activate early gene expression for establishment of infection. Later on, promotes late gene expression by interacting with the viral E2 protein and by inhibiting its transcriptional activation functions. During virion assembly, encapsidates the genome by direct interaction with the viral DNA.</text>
</comment>
<comment type="subunit">
    <text evidence="1">Interacts with major capsid protein L1. Interacts with E2; this interaction inhibits E2 transcriptional activity but not the DNA replication function E2. Interacts with host GADD45GIP1. Interacts with host HSPA8; this interaction is required for L2 nuclear translocation. Interacts with host importins KPNB2 and KPNB3. Forms a complex with importin alpha2-beta1 heterodimers via interaction with the importin alpha2 adapter. Interacts with host DYNLT1; this interaction is essential for virus intracellular transport during entry. Interacts (via C-terminus) with host retromer subunits VPS35 and VPS29.</text>
</comment>
<comment type="subcellular location">
    <subcellularLocation>
        <location evidence="1">Virion</location>
    </subcellularLocation>
    <subcellularLocation>
        <location evidence="1">Host nucleus</location>
    </subcellularLocation>
    <subcellularLocation>
        <location evidence="1">Host early endosome</location>
    </subcellularLocation>
    <subcellularLocation>
        <location evidence="1">Host Golgi apparatus</location>
    </subcellularLocation>
</comment>
<comment type="PTM">
    <text evidence="1">Highly phosphorylated.</text>
</comment>
<comment type="similarity">
    <text evidence="1">Belongs to the papillomaviridae L2 protein family.</text>
</comment>
<evidence type="ECO:0000255" key="1">
    <source>
        <dbReference type="HAMAP-Rule" id="MF_04003"/>
    </source>
</evidence>